<name>SWR1_DEBHA</name>
<gene>
    <name type="primary">SWR1</name>
    <name type="ordered locus">DEHA2F23188g</name>
</gene>
<proteinExistence type="inferred from homology"/>
<organism>
    <name type="scientific">Debaryomyces hansenii (strain ATCC 36239 / CBS 767 / BCRC 21394 / JCM 1990 / NBRC 0083 / IGC 2968)</name>
    <name type="common">Yeast</name>
    <name type="synonym">Torulaspora hansenii</name>
    <dbReference type="NCBI Taxonomy" id="284592"/>
    <lineage>
        <taxon>Eukaryota</taxon>
        <taxon>Fungi</taxon>
        <taxon>Dikarya</taxon>
        <taxon>Ascomycota</taxon>
        <taxon>Saccharomycotina</taxon>
        <taxon>Pichiomycetes</taxon>
        <taxon>Debaryomycetaceae</taxon>
        <taxon>Debaryomyces</taxon>
    </lineage>
</organism>
<protein>
    <recommendedName>
        <fullName>Helicase SWR1</fullName>
        <ecNumber>3.6.4.12</ecNumber>
    </recommendedName>
</protein>
<keyword id="KW-0010">Activator</keyword>
<keyword id="KW-0067">ATP-binding</keyword>
<keyword id="KW-0156">Chromatin regulator</keyword>
<keyword id="KW-0238">DNA-binding</keyword>
<keyword id="KW-0347">Helicase</keyword>
<keyword id="KW-0378">Hydrolase</keyword>
<keyword id="KW-0547">Nucleotide-binding</keyword>
<keyword id="KW-0539">Nucleus</keyword>
<keyword id="KW-1185">Reference proteome</keyword>
<keyword id="KW-0804">Transcription</keyword>
<keyword id="KW-0805">Transcription regulation</keyword>
<comment type="function">
    <text evidence="1">Catalytic component of the SWR1 complex which mediates the ATP-dependent exchange of histone H2A for the H2A variant HZT1 leading to transcriptional regulation of selected genes by chromatin remodeling.</text>
</comment>
<comment type="catalytic activity">
    <reaction>
        <text>ATP + H2O = ADP + phosphate + H(+)</text>
        <dbReference type="Rhea" id="RHEA:13065"/>
        <dbReference type="ChEBI" id="CHEBI:15377"/>
        <dbReference type="ChEBI" id="CHEBI:15378"/>
        <dbReference type="ChEBI" id="CHEBI:30616"/>
        <dbReference type="ChEBI" id="CHEBI:43474"/>
        <dbReference type="ChEBI" id="CHEBI:456216"/>
        <dbReference type="EC" id="3.6.4.12"/>
    </reaction>
</comment>
<comment type="subunit">
    <text evidence="1">Component of the SWR1 chromatin-remodeling complex.</text>
</comment>
<comment type="subcellular location">
    <subcellularLocation>
        <location evidence="4">Nucleus</location>
    </subcellularLocation>
</comment>
<comment type="similarity">
    <text evidence="6">Belongs to the SNF2/RAD54 helicase family. SWR1 subfamily.</text>
</comment>
<evidence type="ECO:0000250" key="1"/>
<evidence type="ECO:0000255" key="2">
    <source>
        <dbReference type="PROSITE-ProRule" id="PRU00541"/>
    </source>
</evidence>
<evidence type="ECO:0000255" key="3">
    <source>
        <dbReference type="PROSITE-ProRule" id="PRU00542"/>
    </source>
</evidence>
<evidence type="ECO:0000255" key="4">
    <source>
        <dbReference type="PROSITE-ProRule" id="PRU00549"/>
    </source>
</evidence>
<evidence type="ECO:0000256" key="5">
    <source>
        <dbReference type="SAM" id="MobiDB-lite"/>
    </source>
</evidence>
<evidence type="ECO:0000305" key="6"/>
<accession>Q6BKC2</accession>
<accession>B5RUM2</accession>
<feature type="chain" id="PRO_0000074367" description="Helicase SWR1">
    <location>
        <begin position="1"/>
        <end position="1616"/>
    </location>
</feature>
<feature type="domain" description="HSA" evidence="4">
    <location>
        <begin position="396"/>
        <end position="468"/>
    </location>
</feature>
<feature type="domain" description="Helicase ATP-binding" evidence="2">
    <location>
        <begin position="793"/>
        <end position="958"/>
    </location>
</feature>
<feature type="domain" description="Helicase C-terminal" evidence="3">
    <location>
        <begin position="1333"/>
        <end position="1486"/>
    </location>
</feature>
<feature type="region of interest" description="Disordered" evidence="5">
    <location>
        <begin position="1"/>
        <end position="53"/>
    </location>
</feature>
<feature type="region of interest" description="Disordered" evidence="5">
    <location>
        <begin position="185"/>
        <end position="238"/>
    </location>
</feature>
<feature type="region of interest" description="Disordered" evidence="5">
    <location>
        <begin position="521"/>
        <end position="565"/>
    </location>
</feature>
<feature type="region of interest" description="Disordered" evidence="5">
    <location>
        <begin position="583"/>
        <end position="614"/>
    </location>
</feature>
<feature type="region of interest" description="Disordered" evidence="5">
    <location>
        <begin position="645"/>
        <end position="774"/>
    </location>
</feature>
<feature type="region of interest" description="Disordered" evidence="5">
    <location>
        <begin position="992"/>
        <end position="1013"/>
    </location>
</feature>
<feature type="region of interest" description="Disordered" evidence="5">
    <location>
        <begin position="1545"/>
        <end position="1576"/>
    </location>
</feature>
<feature type="short sequence motif" description="DEAH box">
    <location>
        <begin position="909"/>
        <end position="912"/>
    </location>
</feature>
<feature type="compositionally biased region" description="Basic residues" evidence="5">
    <location>
        <begin position="1"/>
        <end position="10"/>
    </location>
</feature>
<feature type="compositionally biased region" description="Polar residues" evidence="5">
    <location>
        <begin position="11"/>
        <end position="26"/>
    </location>
</feature>
<feature type="compositionally biased region" description="Low complexity" evidence="5">
    <location>
        <begin position="200"/>
        <end position="209"/>
    </location>
</feature>
<feature type="compositionally biased region" description="Acidic residues" evidence="5">
    <location>
        <begin position="529"/>
        <end position="538"/>
    </location>
</feature>
<feature type="compositionally biased region" description="Basic and acidic residues" evidence="5">
    <location>
        <begin position="645"/>
        <end position="654"/>
    </location>
</feature>
<feature type="compositionally biased region" description="Acidic residues" evidence="5">
    <location>
        <begin position="705"/>
        <end position="737"/>
    </location>
</feature>
<feature type="compositionally biased region" description="Basic and acidic residues" evidence="5">
    <location>
        <begin position="738"/>
        <end position="751"/>
    </location>
</feature>
<feature type="compositionally biased region" description="Acidic residues" evidence="5">
    <location>
        <begin position="752"/>
        <end position="763"/>
    </location>
</feature>
<feature type="compositionally biased region" description="Basic and acidic residues" evidence="5">
    <location>
        <begin position="1001"/>
        <end position="1013"/>
    </location>
</feature>
<feature type="compositionally biased region" description="Polar residues" evidence="5">
    <location>
        <begin position="1555"/>
        <end position="1567"/>
    </location>
</feature>
<feature type="binding site" evidence="2">
    <location>
        <begin position="806"/>
        <end position="813"/>
    </location>
    <ligand>
        <name>ATP</name>
        <dbReference type="ChEBI" id="CHEBI:30616"/>
    </ligand>
</feature>
<reference key="1">
    <citation type="journal article" date="2004" name="Nature">
        <title>Genome evolution in yeasts.</title>
        <authorList>
            <person name="Dujon B."/>
            <person name="Sherman D."/>
            <person name="Fischer G."/>
            <person name="Durrens P."/>
            <person name="Casaregola S."/>
            <person name="Lafontaine I."/>
            <person name="de Montigny J."/>
            <person name="Marck C."/>
            <person name="Neuveglise C."/>
            <person name="Talla E."/>
            <person name="Goffard N."/>
            <person name="Frangeul L."/>
            <person name="Aigle M."/>
            <person name="Anthouard V."/>
            <person name="Babour A."/>
            <person name="Barbe V."/>
            <person name="Barnay S."/>
            <person name="Blanchin S."/>
            <person name="Beckerich J.-M."/>
            <person name="Beyne E."/>
            <person name="Bleykasten C."/>
            <person name="Boisrame A."/>
            <person name="Boyer J."/>
            <person name="Cattolico L."/>
            <person name="Confanioleri F."/>
            <person name="de Daruvar A."/>
            <person name="Despons L."/>
            <person name="Fabre E."/>
            <person name="Fairhead C."/>
            <person name="Ferry-Dumazet H."/>
            <person name="Groppi A."/>
            <person name="Hantraye F."/>
            <person name="Hennequin C."/>
            <person name="Jauniaux N."/>
            <person name="Joyet P."/>
            <person name="Kachouri R."/>
            <person name="Kerrest A."/>
            <person name="Koszul R."/>
            <person name="Lemaire M."/>
            <person name="Lesur I."/>
            <person name="Ma L."/>
            <person name="Muller H."/>
            <person name="Nicaud J.-M."/>
            <person name="Nikolski M."/>
            <person name="Oztas S."/>
            <person name="Ozier-Kalogeropoulos O."/>
            <person name="Pellenz S."/>
            <person name="Potier S."/>
            <person name="Richard G.-F."/>
            <person name="Straub M.-L."/>
            <person name="Suleau A."/>
            <person name="Swennen D."/>
            <person name="Tekaia F."/>
            <person name="Wesolowski-Louvel M."/>
            <person name="Westhof E."/>
            <person name="Wirth B."/>
            <person name="Zeniou-Meyer M."/>
            <person name="Zivanovic Y."/>
            <person name="Bolotin-Fukuhara M."/>
            <person name="Thierry A."/>
            <person name="Bouchier C."/>
            <person name="Caudron B."/>
            <person name="Scarpelli C."/>
            <person name="Gaillardin C."/>
            <person name="Weissenbach J."/>
            <person name="Wincker P."/>
            <person name="Souciet J.-L."/>
        </authorList>
    </citation>
    <scope>NUCLEOTIDE SEQUENCE [LARGE SCALE GENOMIC DNA]</scope>
    <source>
        <strain>ATCC 36239 / CBS 767 / BCRC 21394 / JCM 1990 / NBRC 0083 / IGC 2968</strain>
    </source>
</reference>
<sequence>MARGGSRRRNTSVISTQKIEPSNESTKAPEGPQKRKPKTEIPNSNGNGVIKKEIKKRKLDNELDESQEHLAQLITDFNLSVNELFQLKEYKTIAYWNPDDFSRASSTSQVPEIFDLFSKEPEYQISWGADSNEQDLSNIPLRLQKKIINEREQKLLEKFPFKEKVLKRSRDLEIELLQNIRQSKKTLEKSHIKPSPPVKPSKTSKGNQKIIKKKQVVKQEEEEAQENHQNEEYESDMDEGTHYKLKAVKYSIPPPIVTHPSHIPSWVPDPNHTESSFNSKDSEIIDYHPDAIQFVSNSKTTYTTPNIQAKIQNFLASYKSAIIDETSSGDFNNTLEEYEKIMTQQEQFIKKLYEKTSIEKRLELNGEKIERRKTVLPHSSNTKQAVDPFRSHGAIIPKTQGVTIHSTHHDYFLSHGMAFSRLHQQMRRQHQLRTKKITQMIEQHFKKKKGEKERLAKEKEQNLKRISKMAVQAVKKRWIQASKVYRFLQLQKEEELKKIKGREHLSQMLEHSTQLLEAQFNKSSRDISEVDTENENETDDHLSSSSDEDSGSPQNARDDSNVNMDENDMQLTVEELRAKYADIDQSIEPSSKTISSDSSNHESDSDDEDIDANKGLVALYGNNAVSVEPVSSLAATEYTDEQKTLIEKFSKEDEGISSESVSDDSLNDSSSSESDDDSEVDESNHKQVDSTKPTGLAALLGNGPTEDEEDSNDDVSADSDGNVSDDENMSTTDEEDEPKTPKSSEDPKMDEKENESDVLEEEVNGSKVRDVPLPPLLRGTLRPYQKQGLNWLASLYNNGTNGILADEMGLGKTIQTISLLAYLAAEHHIWGPHLIVVPTSVMLNWEMEFKKFAPGFKVLTYYGSPQQRAQKRKGWNKPNAFHVCITSYQLVVHDHQSFKRRRWRYMILDEAHNIKNFRSARWRALLNFNTENRLLLTGTPLQNNLMELWSLLYFLMPSSKVNQAMPDGFANLEDFQTWFGRPVDKILEKTSNGTSSDVIDENDKTTQRMDEETRNTVSRLHQVLRPYLLRRLKKDVEKQMPGKYEHIIYCRLSKRQRYLYDDFMSRAQTKETLASGNFLSIINCLMQLRKVCNHPDLFEVRPIVTSLAMPRCVANSFASTDSVVRKYLNDDSFKGQVSLKALNLDITSLDQLNYFTSQTTSKLKSSSELDKQADKLNELISASEYDQPNLDNFLEYYKFIKSNEQVGIRDNLKHASYLNSLRCDRIPLLGESVIKFLQTATQPRQPFTDAYNDIILSIPKRVEKMDDVIEKYSVLTPSVVTLDLKDQLIPLSTQRTIMNEVANKNIDNPFHKSQVKLSIAFPDKSLLQFDCGKLQKLATLLQDLTANGHRALIFTQMTKVLDILEQFLNIHGYRYMRLDGATKIEDRQLLTEKFNRDSKIPVFILSTRSGGLGINLTGADTVIFYDSDWNPAMDKQCQDRCHRIGQSRDVHIYRFVSEYTIESNILRKANQKRQLDNVVIQEGEFTTDYFGKFSVKDLVNDAEVADIPDKPLEPAYGNVENVLAQAEDEDDRVAANAAMKEVAIDDEDFDEESKAATNTATPSQTPGPDTAGSGIVDSTVKINNKTDSLEDVDYEDGVSHVDEYMLRFIANGYYWD</sequence>
<dbReference type="EC" id="3.6.4.12"/>
<dbReference type="EMBL" id="CR382138">
    <property type="protein sequence ID" value="CAR66400.1"/>
    <property type="molecule type" value="Genomic_DNA"/>
</dbReference>
<dbReference type="RefSeq" id="XP_002770883.1">
    <property type="nucleotide sequence ID" value="XM_002770837.1"/>
</dbReference>
<dbReference type="SMR" id="Q6BKC2"/>
<dbReference type="FunCoup" id="Q6BKC2">
    <property type="interactions" value="230"/>
</dbReference>
<dbReference type="STRING" id="284592.Q6BKC2"/>
<dbReference type="GeneID" id="8999049"/>
<dbReference type="KEGG" id="dha:DEHA2F23188g"/>
<dbReference type="VEuPathDB" id="FungiDB:DEHA2F23188g"/>
<dbReference type="eggNOG" id="KOG0391">
    <property type="taxonomic scope" value="Eukaryota"/>
</dbReference>
<dbReference type="HOGENOM" id="CLU_000315_24_4_1"/>
<dbReference type="InParanoid" id="Q6BKC2"/>
<dbReference type="OMA" id="AFQQWFG"/>
<dbReference type="OrthoDB" id="372624at2759"/>
<dbReference type="Proteomes" id="UP000000599">
    <property type="component" value="Chromosome F"/>
</dbReference>
<dbReference type="GO" id="GO:0005829">
    <property type="term" value="C:cytosol"/>
    <property type="evidence" value="ECO:0007669"/>
    <property type="project" value="EnsemblFungi"/>
</dbReference>
<dbReference type="GO" id="GO:0000812">
    <property type="term" value="C:Swr1 complex"/>
    <property type="evidence" value="ECO:0007669"/>
    <property type="project" value="EnsemblFungi"/>
</dbReference>
<dbReference type="GO" id="GO:0005524">
    <property type="term" value="F:ATP binding"/>
    <property type="evidence" value="ECO:0007669"/>
    <property type="project" value="UniProtKB-KW"/>
</dbReference>
<dbReference type="GO" id="GO:0016887">
    <property type="term" value="F:ATP hydrolysis activity"/>
    <property type="evidence" value="ECO:0007669"/>
    <property type="project" value="RHEA"/>
</dbReference>
<dbReference type="GO" id="GO:0003677">
    <property type="term" value="F:DNA binding"/>
    <property type="evidence" value="ECO:0007669"/>
    <property type="project" value="UniProtKB-KW"/>
</dbReference>
<dbReference type="GO" id="GO:0004386">
    <property type="term" value="F:helicase activity"/>
    <property type="evidence" value="ECO:0007669"/>
    <property type="project" value="UniProtKB-KW"/>
</dbReference>
<dbReference type="GO" id="GO:0042393">
    <property type="term" value="F:histone binding"/>
    <property type="evidence" value="ECO:0007669"/>
    <property type="project" value="TreeGrafter"/>
</dbReference>
<dbReference type="GO" id="GO:0005198">
    <property type="term" value="F:structural molecule activity"/>
    <property type="evidence" value="ECO:0007669"/>
    <property type="project" value="EnsemblFungi"/>
</dbReference>
<dbReference type="GO" id="GO:0006338">
    <property type="term" value="P:chromatin remodeling"/>
    <property type="evidence" value="ECO:0007669"/>
    <property type="project" value="EnsemblFungi"/>
</dbReference>
<dbReference type="GO" id="GO:0000725">
    <property type="term" value="P:recombinational repair"/>
    <property type="evidence" value="ECO:0007669"/>
    <property type="project" value="EnsemblFungi"/>
</dbReference>
<dbReference type="CDD" id="cd18003">
    <property type="entry name" value="DEXQc_SRCAP"/>
    <property type="match status" value="1"/>
</dbReference>
<dbReference type="CDD" id="cd18793">
    <property type="entry name" value="SF2_C_SNF"/>
    <property type="match status" value="1"/>
</dbReference>
<dbReference type="FunFam" id="3.40.50.10810:FF:000005">
    <property type="entry name" value="Photoperiod-independent early flowering 1"/>
    <property type="match status" value="1"/>
</dbReference>
<dbReference type="FunFam" id="3.40.50.300:FF:000655">
    <property type="entry name" value="Protein PHOTOPERIOD-INDEPENDENT EARLY FLOWERING 1"/>
    <property type="match status" value="1"/>
</dbReference>
<dbReference type="Gene3D" id="3.40.50.300">
    <property type="entry name" value="P-loop containing nucleotide triphosphate hydrolases"/>
    <property type="match status" value="1"/>
</dbReference>
<dbReference type="Gene3D" id="1.20.120.850">
    <property type="entry name" value="SWI2/SNF2 ATPases, N-terminal domain"/>
    <property type="match status" value="1"/>
</dbReference>
<dbReference type="Gene3D" id="3.40.50.10810">
    <property type="entry name" value="Tandem AAA-ATPase domain"/>
    <property type="match status" value="1"/>
</dbReference>
<dbReference type="InterPro" id="IPR014001">
    <property type="entry name" value="Helicase_ATP-bd"/>
</dbReference>
<dbReference type="InterPro" id="IPR001650">
    <property type="entry name" value="Helicase_C-like"/>
</dbReference>
<dbReference type="InterPro" id="IPR014012">
    <property type="entry name" value="HSA_dom"/>
</dbReference>
<dbReference type="InterPro" id="IPR050520">
    <property type="entry name" value="INO80/SWR1_helicase"/>
</dbReference>
<dbReference type="InterPro" id="IPR027417">
    <property type="entry name" value="P-loop_NTPase"/>
</dbReference>
<dbReference type="InterPro" id="IPR038718">
    <property type="entry name" value="SNF2-like_sf"/>
</dbReference>
<dbReference type="InterPro" id="IPR049730">
    <property type="entry name" value="SNF2/RAD54-like_C"/>
</dbReference>
<dbReference type="InterPro" id="IPR000330">
    <property type="entry name" value="SNF2_N"/>
</dbReference>
<dbReference type="PANTHER" id="PTHR45685:SF1">
    <property type="entry name" value="HELICASE SRCAP"/>
    <property type="match status" value="1"/>
</dbReference>
<dbReference type="PANTHER" id="PTHR45685">
    <property type="entry name" value="HELICASE SRCAP-RELATED"/>
    <property type="match status" value="1"/>
</dbReference>
<dbReference type="Pfam" id="PF00271">
    <property type="entry name" value="Helicase_C"/>
    <property type="match status" value="1"/>
</dbReference>
<dbReference type="Pfam" id="PF07529">
    <property type="entry name" value="HSA"/>
    <property type="match status" value="1"/>
</dbReference>
<dbReference type="Pfam" id="PF00176">
    <property type="entry name" value="SNF2-rel_dom"/>
    <property type="match status" value="1"/>
</dbReference>
<dbReference type="SMART" id="SM00487">
    <property type="entry name" value="DEXDc"/>
    <property type="match status" value="1"/>
</dbReference>
<dbReference type="SMART" id="SM00490">
    <property type="entry name" value="HELICc"/>
    <property type="match status" value="1"/>
</dbReference>
<dbReference type="SUPFAM" id="SSF52540">
    <property type="entry name" value="P-loop containing nucleoside triphosphate hydrolases"/>
    <property type="match status" value="2"/>
</dbReference>
<dbReference type="PROSITE" id="PS51192">
    <property type="entry name" value="HELICASE_ATP_BIND_1"/>
    <property type="match status" value="1"/>
</dbReference>
<dbReference type="PROSITE" id="PS51194">
    <property type="entry name" value="HELICASE_CTER"/>
    <property type="match status" value="1"/>
</dbReference>
<dbReference type="PROSITE" id="PS51204">
    <property type="entry name" value="HSA"/>
    <property type="match status" value="1"/>
</dbReference>